<protein>
    <recommendedName>
        <fullName evidence="1">NADH-quinone oxidoreductase subunit N</fullName>
        <ecNumber evidence="1">7.1.1.-</ecNumber>
    </recommendedName>
    <alternativeName>
        <fullName evidence="1">NADH dehydrogenase I subunit N</fullName>
    </alternativeName>
    <alternativeName>
        <fullName evidence="1">NDH-1 subunit N</fullName>
    </alternativeName>
</protein>
<accession>Q1R9E1</accession>
<proteinExistence type="inferred from homology"/>
<reference key="1">
    <citation type="journal article" date="2006" name="Proc. Natl. Acad. Sci. U.S.A.">
        <title>Identification of genes subject to positive selection in uropathogenic strains of Escherichia coli: a comparative genomics approach.</title>
        <authorList>
            <person name="Chen S.L."/>
            <person name="Hung C.-S."/>
            <person name="Xu J."/>
            <person name="Reigstad C.S."/>
            <person name="Magrini V."/>
            <person name="Sabo A."/>
            <person name="Blasiar D."/>
            <person name="Bieri T."/>
            <person name="Meyer R.R."/>
            <person name="Ozersky P."/>
            <person name="Armstrong J.R."/>
            <person name="Fulton R.S."/>
            <person name="Latreille J.P."/>
            <person name="Spieth J."/>
            <person name="Hooton T.M."/>
            <person name="Mardis E.R."/>
            <person name="Hultgren S.J."/>
            <person name="Gordon J.I."/>
        </authorList>
    </citation>
    <scope>NUCLEOTIDE SEQUENCE [LARGE SCALE GENOMIC DNA]</scope>
    <source>
        <strain>UTI89 / UPEC</strain>
    </source>
</reference>
<evidence type="ECO:0000255" key="1">
    <source>
        <dbReference type="HAMAP-Rule" id="MF_00445"/>
    </source>
</evidence>
<feature type="chain" id="PRO_0000249442" description="NADH-quinone oxidoreductase subunit N">
    <location>
        <begin position="1"/>
        <end position="485"/>
    </location>
</feature>
<feature type="transmembrane region" description="Helical" evidence="1">
    <location>
        <begin position="8"/>
        <end position="28"/>
    </location>
</feature>
<feature type="transmembrane region" description="Helical" evidence="1">
    <location>
        <begin position="35"/>
        <end position="55"/>
    </location>
</feature>
<feature type="transmembrane region" description="Helical" evidence="1">
    <location>
        <begin position="71"/>
        <end position="91"/>
    </location>
</feature>
<feature type="transmembrane region" description="Helical" evidence="1">
    <location>
        <begin position="105"/>
        <end position="125"/>
    </location>
</feature>
<feature type="transmembrane region" description="Helical" evidence="1">
    <location>
        <begin position="127"/>
        <end position="147"/>
    </location>
</feature>
<feature type="transmembrane region" description="Helical" evidence="1">
    <location>
        <begin position="159"/>
        <end position="179"/>
    </location>
</feature>
<feature type="transmembrane region" description="Helical" evidence="1">
    <location>
        <begin position="203"/>
        <end position="223"/>
    </location>
</feature>
<feature type="transmembrane region" description="Helical" evidence="1">
    <location>
        <begin position="235"/>
        <end position="255"/>
    </location>
</feature>
<feature type="transmembrane region" description="Helical" evidence="1">
    <location>
        <begin position="271"/>
        <end position="291"/>
    </location>
</feature>
<feature type="transmembrane region" description="Helical" evidence="1">
    <location>
        <begin position="297"/>
        <end position="317"/>
    </location>
</feature>
<feature type="transmembrane region" description="Helical" evidence="1">
    <location>
        <begin position="326"/>
        <end position="346"/>
    </location>
</feature>
<feature type="transmembrane region" description="Helical" evidence="1">
    <location>
        <begin position="373"/>
        <end position="393"/>
    </location>
</feature>
<feature type="transmembrane region" description="Helical" evidence="1">
    <location>
        <begin position="408"/>
        <end position="430"/>
    </location>
</feature>
<feature type="transmembrane region" description="Helical" evidence="1">
    <location>
        <begin position="455"/>
        <end position="475"/>
    </location>
</feature>
<name>NUON_ECOUT</name>
<comment type="function">
    <text evidence="1">NDH-1 shuttles electrons from NADH, via FMN and iron-sulfur (Fe-S) centers, to quinones in the respiratory chain. The immediate electron acceptor for the enzyme in this species is believed to be ubiquinone. Couples the redox reaction to proton translocation (for every two electrons transferred, four hydrogen ions are translocated across the cytoplasmic membrane), and thus conserves the redox energy in a proton gradient.</text>
</comment>
<comment type="catalytic activity">
    <reaction evidence="1">
        <text>a quinone + NADH + 5 H(+)(in) = a quinol + NAD(+) + 4 H(+)(out)</text>
        <dbReference type="Rhea" id="RHEA:57888"/>
        <dbReference type="ChEBI" id="CHEBI:15378"/>
        <dbReference type="ChEBI" id="CHEBI:24646"/>
        <dbReference type="ChEBI" id="CHEBI:57540"/>
        <dbReference type="ChEBI" id="CHEBI:57945"/>
        <dbReference type="ChEBI" id="CHEBI:132124"/>
    </reaction>
</comment>
<comment type="subunit">
    <text evidence="1">NDH-1 is composed of 13 different subunits. Subunits NuoA, H, J, K, L, M, N constitute the membrane sector of the complex.</text>
</comment>
<comment type="subcellular location">
    <subcellularLocation>
        <location evidence="1">Cell inner membrane</location>
        <topology evidence="1">Multi-pass membrane protein</topology>
    </subcellularLocation>
</comment>
<comment type="similarity">
    <text evidence="1">Belongs to the complex I subunit 2 family.</text>
</comment>
<dbReference type="EC" id="7.1.1.-" evidence="1"/>
<dbReference type="EMBL" id="CP000243">
    <property type="protein sequence ID" value="ABE08023.1"/>
    <property type="molecule type" value="Genomic_DNA"/>
</dbReference>
<dbReference type="RefSeq" id="WP_000156712.1">
    <property type="nucleotide sequence ID" value="NZ_CP064825.1"/>
</dbReference>
<dbReference type="SMR" id="Q1R9E1"/>
<dbReference type="KEGG" id="eci:UTI89_C2556"/>
<dbReference type="HOGENOM" id="CLU_007100_1_5_6"/>
<dbReference type="Proteomes" id="UP000001952">
    <property type="component" value="Chromosome"/>
</dbReference>
<dbReference type="GO" id="GO:0005886">
    <property type="term" value="C:plasma membrane"/>
    <property type="evidence" value="ECO:0007669"/>
    <property type="project" value="UniProtKB-SubCell"/>
</dbReference>
<dbReference type="GO" id="GO:0008137">
    <property type="term" value="F:NADH dehydrogenase (ubiquinone) activity"/>
    <property type="evidence" value="ECO:0007669"/>
    <property type="project" value="InterPro"/>
</dbReference>
<dbReference type="GO" id="GO:0050136">
    <property type="term" value="F:NADH:ubiquinone reductase (non-electrogenic) activity"/>
    <property type="evidence" value="ECO:0007669"/>
    <property type="project" value="UniProtKB-UniRule"/>
</dbReference>
<dbReference type="GO" id="GO:0048038">
    <property type="term" value="F:quinone binding"/>
    <property type="evidence" value="ECO:0007669"/>
    <property type="project" value="UniProtKB-KW"/>
</dbReference>
<dbReference type="GO" id="GO:0042773">
    <property type="term" value="P:ATP synthesis coupled electron transport"/>
    <property type="evidence" value="ECO:0007669"/>
    <property type="project" value="InterPro"/>
</dbReference>
<dbReference type="HAMAP" id="MF_00445">
    <property type="entry name" value="NDH1_NuoN_1"/>
    <property type="match status" value="1"/>
</dbReference>
<dbReference type="InterPro" id="IPR010096">
    <property type="entry name" value="NADH-Q_OxRdtase_suN/2"/>
</dbReference>
<dbReference type="InterPro" id="IPR001750">
    <property type="entry name" value="ND/Mrp_TM"/>
</dbReference>
<dbReference type="NCBIfam" id="TIGR01770">
    <property type="entry name" value="NDH_I_N"/>
    <property type="match status" value="1"/>
</dbReference>
<dbReference type="NCBIfam" id="NF004439">
    <property type="entry name" value="PRK05777.1-1"/>
    <property type="match status" value="1"/>
</dbReference>
<dbReference type="PANTHER" id="PTHR22773">
    <property type="entry name" value="NADH DEHYDROGENASE"/>
    <property type="match status" value="1"/>
</dbReference>
<dbReference type="Pfam" id="PF00361">
    <property type="entry name" value="Proton_antipo_M"/>
    <property type="match status" value="1"/>
</dbReference>
<keyword id="KW-0997">Cell inner membrane</keyword>
<keyword id="KW-1003">Cell membrane</keyword>
<keyword id="KW-0472">Membrane</keyword>
<keyword id="KW-0520">NAD</keyword>
<keyword id="KW-0874">Quinone</keyword>
<keyword id="KW-1278">Translocase</keyword>
<keyword id="KW-0812">Transmembrane</keyword>
<keyword id="KW-1133">Transmembrane helix</keyword>
<keyword id="KW-0813">Transport</keyword>
<keyword id="KW-0830">Ubiquinone</keyword>
<gene>
    <name evidence="1" type="primary">nuoN</name>
    <name type="ordered locus">UTI89_C2556</name>
</gene>
<sequence length="485" mass="52072">MTITPQNLIALLPLLIVGLTVVVVMLSIAWRRNHFLNATLSVIGLNAALVSLWFVGQAGAMDVTPLMRVDGFAMLYTGLVLLASLATCTFAYPWLEGYNDNKDEFYLLVLIAALGGILLANANHLASLFLGIELISLPLFGLVGYAFRQKRSLEASIKYTILSAAASSFLLFGMALVYAQSGDLSFVALGKNLGDGMLNEPLLLAGFGLMIVGLGFKLSLVPFHLWTPDVYQGAPAPVSTFLATASKIAIFGVVMRLFLYAPVGDSEAIRVVLAIIAFASIIFGNLMALSQTNIKRLLGYSSISHLGYLLVALIALQTGEMSMEAVGVYLVGYLFSSLGAFGVVSLMSSPYRGPDADSLFSYRGLFWHRPILAAVMTVMMLSLAGIPMTLGFIGKFYVLAVGVQAHLWWLVGAVVVGSAIGLYYYLRVAVSLYLHAPEQPGRDAPSNWQYSAGGIVVLISALLVLVLGVWPQPLISIVRLAMPLM</sequence>
<organism>
    <name type="scientific">Escherichia coli (strain UTI89 / UPEC)</name>
    <dbReference type="NCBI Taxonomy" id="364106"/>
    <lineage>
        <taxon>Bacteria</taxon>
        <taxon>Pseudomonadati</taxon>
        <taxon>Pseudomonadota</taxon>
        <taxon>Gammaproteobacteria</taxon>
        <taxon>Enterobacterales</taxon>
        <taxon>Enterobacteriaceae</taxon>
        <taxon>Escherichia</taxon>
    </lineage>
</organism>